<sequence>MSRTKKTRRITDIMPARKADKKPEQPKLSGGKNRKSTRYELDAKAREEKKKRKHKGLPTGSRNVDPAEQKKAAVKEVKDPRIGSRKKIPLMVEFVNKPEKGQIIKPVAMEEYKPHLSPELELEQLENNEILNQLLDEIEAGKTLSAKDQKFVDECLDRIDELMTELGIQDEDEDNGDALLRQFETMDINQFR</sequence>
<reference key="1">
    <citation type="journal article" date="2008" name="PLoS ONE">
        <title>Genome biology of Actinobacillus pleuropneumoniae JL03, an isolate of serotype 3 prevalent in China.</title>
        <authorList>
            <person name="Xu Z."/>
            <person name="Zhou Y."/>
            <person name="Li L."/>
            <person name="Zhou R."/>
            <person name="Xiao S."/>
            <person name="Wan Y."/>
            <person name="Zhang S."/>
            <person name="Wang K."/>
            <person name="Li W."/>
            <person name="Li L."/>
            <person name="Jin H."/>
            <person name="Kang M."/>
            <person name="Dalai B."/>
            <person name="Li T."/>
            <person name="Liu L."/>
            <person name="Cheng Y."/>
            <person name="Zhang L."/>
            <person name="Xu T."/>
            <person name="Zheng H."/>
            <person name="Pu S."/>
            <person name="Wang B."/>
            <person name="Gu W."/>
            <person name="Zhang X.L."/>
            <person name="Zhu G.-F."/>
            <person name="Wang S."/>
            <person name="Zhao G.-P."/>
            <person name="Chen H."/>
        </authorList>
    </citation>
    <scope>NUCLEOTIDE SEQUENCE [LARGE SCALE GENOMIC DNA]</scope>
    <source>
        <strain>JL03</strain>
    </source>
</reference>
<protein>
    <recommendedName>
        <fullName evidence="1">Der GTPase-activating protein YihI</fullName>
    </recommendedName>
</protein>
<comment type="function">
    <text evidence="1">A GTPase-activating protein (GAP) that modifies Der/EngA GTPase function. May play a role in ribosome biogenesis.</text>
</comment>
<comment type="subunit">
    <text evidence="1">Interacts with Der.</text>
</comment>
<comment type="similarity">
    <text evidence="1">Belongs to the YihI family.</text>
</comment>
<gene>
    <name evidence="1" type="primary">yihI</name>
    <name type="ordered locus">APJL_0984</name>
</gene>
<name>YIHI_ACTPJ</name>
<keyword id="KW-0343">GTPase activation</keyword>
<keyword id="KW-0690">Ribosome biogenesis</keyword>
<accession>B0BPQ7</accession>
<feature type="chain" id="PRO_1000136378" description="Der GTPase-activating protein YihI">
    <location>
        <begin position="1"/>
        <end position="192"/>
    </location>
</feature>
<feature type="region of interest" description="Disordered" evidence="2">
    <location>
        <begin position="1"/>
        <end position="80"/>
    </location>
</feature>
<feature type="compositionally biased region" description="Basic and acidic residues" evidence="2">
    <location>
        <begin position="9"/>
        <end position="25"/>
    </location>
</feature>
<feature type="compositionally biased region" description="Basic and acidic residues" evidence="2">
    <location>
        <begin position="37"/>
        <end position="48"/>
    </location>
</feature>
<feature type="compositionally biased region" description="Basic and acidic residues" evidence="2">
    <location>
        <begin position="65"/>
        <end position="80"/>
    </location>
</feature>
<organism>
    <name type="scientific">Actinobacillus pleuropneumoniae serotype 3 (strain JL03)</name>
    <dbReference type="NCBI Taxonomy" id="434271"/>
    <lineage>
        <taxon>Bacteria</taxon>
        <taxon>Pseudomonadati</taxon>
        <taxon>Pseudomonadota</taxon>
        <taxon>Gammaproteobacteria</taxon>
        <taxon>Pasteurellales</taxon>
        <taxon>Pasteurellaceae</taxon>
        <taxon>Actinobacillus</taxon>
    </lineage>
</organism>
<evidence type="ECO:0000255" key="1">
    <source>
        <dbReference type="HAMAP-Rule" id="MF_01058"/>
    </source>
</evidence>
<evidence type="ECO:0000256" key="2">
    <source>
        <dbReference type="SAM" id="MobiDB-lite"/>
    </source>
</evidence>
<dbReference type="EMBL" id="CP000687">
    <property type="protein sequence ID" value="ABY69542.1"/>
    <property type="molecule type" value="Genomic_DNA"/>
</dbReference>
<dbReference type="RefSeq" id="WP_005608169.1">
    <property type="nucleotide sequence ID" value="NC_010278.1"/>
</dbReference>
<dbReference type="SMR" id="B0BPQ7"/>
<dbReference type="KEGG" id="apj:APJL_0984"/>
<dbReference type="HOGENOM" id="CLU_094104_2_0_6"/>
<dbReference type="Proteomes" id="UP000008547">
    <property type="component" value="Chromosome"/>
</dbReference>
<dbReference type="GO" id="GO:0005096">
    <property type="term" value="F:GTPase activator activity"/>
    <property type="evidence" value="ECO:0007669"/>
    <property type="project" value="UniProtKB-KW"/>
</dbReference>
<dbReference type="GO" id="GO:0042254">
    <property type="term" value="P:ribosome biogenesis"/>
    <property type="evidence" value="ECO:0007669"/>
    <property type="project" value="UniProtKB-KW"/>
</dbReference>
<dbReference type="HAMAP" id="MF_01058">
    <property type="entry name" value="GAP_YihI"/>
    <property type="match status" value="1"/>
</dbReference>
<dbReference type="InterPro" id="IPR007336">
    <property type="entry name" value="YihI"/>
</dbReference>
<dbReference type="NCBIfam" id="NF003560">
    <property type="entry name" value="PRK05244.1-1"/>
    <property type="match status" value="1"/>
</dbReference>
<dbReference type="Pfam" id="PF04220">
    <property type="entry name" value="YihI"/>
    <property type="match status" value="1"/>
</dbReference>
<proteinExistence type="inferred from homology"/>